<keyword id="KW-0269">Exonuclease</keyword>
<keyword id="KW-0378">Hydrolase</keyword>
<keyword id="KW-0479">Metal-binding</keyword>
<keyword id="KW-0540">Nuclease</keyword>
<keyword id="KW-1185">Reference proteome</keyword>
<keyword id="KW-0862">Zinc</keyword>
<proteinExistence type="evidence at protein level"/>
<gene>
    <name type="ordered locus">MJ0162</name>
</gene>
<comment type="function">
    <text evidence="2">A 5'-3' exoribonuclease with a strong reference for 5'-monophosphorylated RNA and no endoribonuclease activty (PubMed:21955587).</text>
</comment>
<comment type="cofactor">
    <cofactor evidence="1">
        <name>Zn(2+)</name>
        <dbReference type="ChEBI" id="CHEBI:29105"/>
    </cofactor>
    <text evidence="2">Optimal NaCl concentration is 100 mM for nuclease activity on RNA (PubMed:21955587).</text>
</comment>
<comment type="activity regulation">
    <text evidence="2">Inhibited by imidazole (PubMed:21955587).</text>
</comment>
<comment type="biophysicochemical properties">
    <temperatureDependence>
        <text evidence="2">Optimum temperature is 60 degrees Celsius for nuclease activity on RNA (PubMed:21955587).</text>
    </temperatureDependence>
</comment>
<comment type="subunit">
    <text evidence="5">Forms homodimers on heating to 60 degrees Celsius which may be the active form (PubMed:21955587).</text>
</comment>
<comment type="similarity">
    <text evidence="5">Belongs to the metallo-beta-lactamase superfamily. RNA-metabolizing metallo-beta-lactamase-like family.</text>
</comment>
<name>RNJL_METJA</name>
<feature type="chain" id="PRO_0000106724" description="RNase J-like protein">
    <location>
        <begin position="1"/>
        <end position="421"/>
    </location>
</feature>
<feature type="binding site" evidence="1">
    <location>
        <position position="55"/>
    </location>
    <ligand>
        <name>Zn(2+)</name>
        <dbReference type="ChEBI" id="CHEBI:29105"/>
        <label>1</label>
        <note>catalytic</note>
    </ligand>
</feature>
<feature type="binding site" evidence="1">
    <location>
        <position position="57"/>
    </location>
    <ligand>
        <name>Zn(2+)</name>
        <dbReference type="ChEBI" id="CHEBI:29105"/>
        <label>1</label>
        <note>catalytic</note>
    </ligand>
</feature>
<feature type="binding site" evidence="1">
    <location>
        <position position="59"/>
    </location>
    <ligand>
        <name>Zn(2+)</name>
        <dbReference type="ChEBI" id="CHEBI:29105"/>
        <label>2</label>
        <note>catalytic</note>
    </ligand>
</feature>
<feature type="binding site" evidence="1">
    <location>
        <position position="60"/>
    </location>
    <ligand>
        <name>Zn(2+)</name>
        <dbReference type="ChEBI" id="CHEBI:29105"/>
        <label>2</label>
        <note>catalytic</note>
    </ligand>
</feature>
<feature type="binding site" evidence="1">
    <location>
        <position position="132"/>
    </location>
    <ligand>
        <name>Zn(2+)</name>
        <dbReference type="ChEBI" id="CHEBI:29105"/>
        <label>1</label>
        <note>catalytic</note>
    </ligand>
</feature>
<feature type="binding site" evidence="1">
    <location>
        <position position="153"/>
    </location>
    <ligand>
        <name>Zn(2+)</name>
        <dbReference type="ChEBI" id="CHEBI:29105"/>
        <label>1</label>
        <note>catalytic</note>
    </ligand>
</feature>
<feature type="binding site" evidence="1">
    <location>
        <position position="153"/>
    </location>
    <ligand>
        <name>Zn(2+)</name>
        <dbReference type="ChEBI" id="CHEBI:29105"/>
        <label>2</label>
        <note>catalytic</note>
    </ligand>
</feature>
<feature type="binding site" evidence="1">
    <location>
        <position position="389"/>
    </location>
    <ligand>
        <name>Zn(2+)</name>
        <dbReference type="ChEBI" id="CHEBI:29105"/>
        <label>2</label>
        <note>catalytic</note>
    </ligand>
</feature>
<sequence>MVLLKFHGGCQQIGMSCVEVETQKGRVLLDCGMSPDTGEIPKVDDKAVDAVIVSHAHLDHCGAIPFYKFKKIYCTHPTADLMFITWRDTLNLTKAYKEEDIQHAMENIECLNYYEERQITENIKFKFYNAGHILGSASIYLEVDGKKILYTGDINEGVSRTLLPADTDIDEIDVLIIESTYGSPLDIKPARKTLERQLIEEISETIENGGKVIIPVFAIGRAQEILLIINNYIRSGKLRDVPIYTDGSLIHATAVYMSYINWLNPKIKNMVENRINPFGEIKKADESLVFNKEPCIIVSTSGMVQGGPVLKYLKLLKDPKNKLILTGYQAEGTLGRELEEGAKEIQPFKNKIPIRGKVVKIEFSAHGDYNSLVRYIKKIPKPEKAIVMHGERYQSLSFAMTIWKTLKIPTFVPVRGTILPI</sequence>
<dbReference type="EC" id="3.1.-.-" evidence="2"/>
<dbReference type="EMBL" id="L77117">
    <property type="protein sequence ID" value="AAB98146.1"/>
    <property type="molecule type" value="Genomic_DNA"/>
</dbReference>
<dbReference type="PIR" id="C64320">
    <property type="entry name" value="C64320"/>
</dbReference>
<dbReference type="RefSeq" id="WP_010869657.1">
    <property type="nucleotide sequence ID" value="NC_000909.1"/>
</dbReference>
<dbReference type="SMR" id="Q57626"/>
<dbReference type="FunCoup" id="Q57626">
    <property type="interactions" value="134"/>
</dbReference>
<dbReference type="STRING" id="243232.MJ_0162"/>
<dbReference type="PaxDb" id="243232-MJ_0162"/>
<dbReference type="EnsemblBacteria" id="AAB98146">
    <property type="protein sequence ID" value="AAB98146"/>
    <property type="gene ID" value="MJ_0162"/>
</dbReference>
<dbReference type="GeneID" id="1451009"/>
<dbReference type="KEGG" id="mja:MJ_0162"/>
<dbReference type="eggNOG" id="arCOG00544">
    <property type="taxonomic scope" value="Archaea"/>
</dbReference>
<dbReference type="HOGENOM" id="CLU_009673_5_1_2"/>
<dbReference type="InParanoid" id="Q57626"/>
<dbReference type="OrthoDB" id="40950at2157"/>
<dbReference type="PhylomeDB" id="Q57626"/>
<dbReference type="Proteomes" id="UP000000805">
    <property type="component" value="Chromosome"/>
</dbReference>
<dbReference type="GO" id="GO:0046872">
    <property type="term" value="F:metal ion binding"/>
    <property type="evidence" value="ECO:0007669"/>
    <property type="project" value="UniProtKB-KW"/>
</dbReference>
<dbReference type="GO" id="GO:0004521">
    <property type="term" value="F:RNA endonuclease activity"/>
    <property type="evidence" value="ECO:0000318"/>
    <property type="project" value="GO_Central"/>
</dbReference>
<dbReference type="GO" id="GO:0004532">
    <property type="term" value="F:RNA exonuclease activity"/>
    <property type="evidence" value="ECO:0000314"/>
    <property type="project" value="UniProtKB"/>
</dbReference>
<dbReference type="CDD" id="cd16295">
    <property type="entry name" value="TTHA0252-CPSF-like_MBL-fold"/>
    <property type="match status" value="1"/>
</dbReference>
<dbReference type="Gene3D" id="3.40.50.10890">
    <property type="match status" value="1"/>
</dbReference>
<dbReference type="Gene3D" id="3.60.15.10">
    <property type="entry name" value="Ribonuclease Z/Hydroxyacylglutathione hydrolase-like"/>
    <property type="match status" value="1"/>
</dbReference>
<dbReference type="InterPro" id="IPR022712">
    <property type="entry name" value="Beta_Casp"/>
</dbReference>
<dbReference type="InterPro" id="IPR050698">
    <property type="entry name" value="MBL"/>
</dbReference>
<dbReference type="InterPro" id="IPR001279">
    <property type="entry name" value="Metallo-B-lactamas"/>
</dbReference>
<dbReference type="InterPro" id="IPR036866">
    <property type="entry name" value="RibonucZ/Hydroxyglut_hydro"/>
</dbReference>
<dbReference type="InterPro" id="IPR011108">
    <property type="entry name" value="RMMBL"/>
</dbReference>
<dbReference type="PANTHER" id="PTHR11203:SF51">
    <property type="entry name" value="CLEAVAGE AND POLYADENYLATION SPECIFICITY FACTOR"/>
    <property type="match status" value="1"/>
</dbReference>
<dbReference type="PANTHER" id="PTHR11203">
    <property type="entry name" value="CLEAVAGE AND POLYADENYLATION SPECIFICITY FACTOR FAMILY MEMBER"/>
    <property type="match status" value="1"/>
</dbReference>
<dbReference type="Pfam" id="PF10996">
    <property type="entry name" value="Beta-Casp"/>
    <property type="match status" value="1"/>
</dbReference>
<dbReference type="Pfam" id="PF00753">
    <property type="entry name" value="Lactamase_B"/>
    <property type="match status" value="1"/>
</dbReference>
<dbReference type="Pfam" id="PF07521">
    <property type="entry name" value="RMMBL"/>
    <property type="match status" value="1"/>
</dbReference>
<dbReference type="SMART" id="SM01027">
    <property type="entry name" value="Beta-Casp"/>
    <property type="match status" value="1"/>
</dbReference>
<dbReference type="SMART" id="SM00849">
    <property type="entry name" value="Lactamase_B"/>
    <property type="match status" value="1"/>
</dbReference>
<dbReference type="SUPFAM" id="SSF56281">
    <property type="entry name" value="Metallo-hydrolase/oxidoreductase"/>
    <property type="match status" value="1"/>
</dbReference>
<dbReference type="PROSITE" id="PS51257">
    <property type="entry name" value="PROKAR_LIPOPROTEIN"/>
    <property type="match status" value="1"/>
</dbReference>
<protein>
    <recommendedName>
        <fullName evidence="4">RNase J-like protein</fullName>
        <ecNumber evidence="2">3.1.-.-</ecNumber>
    </recommendedName>
    <alternativeName>
        <fullName evidence="3">RNase J1</fullName>
    </alternativeName>
</protein>
<reference key="1">
    <citation type="journal article" date="1996" name="Science">
        <title>Complete genome sequence of the methanogenic archaeon, Methanococcus jannaschii.</title>
        <authorList>
            <person name="Bult C.J."/>
            <person name="White O."/>
            <person name="Olsen G.J."/>
            <person name="Zhou L."/>
            <person name="Fleischmann R.D."/>
            <person name="Sutton G.G."/>
            <person name="Blake J.A."/>
            <person name="FitzGerald L.M."/>
            <person name="Clayton R.A."/>
            <person name="Gocayne J.D."/>
            <person name="Kerlavage A.R."/>
            <person name="Dougherty B.A."/>
            <person name="Tomb J.-F."/>
            <person name="Adams M.D."/>
            <person name="Reich C.I."/>
            <person name="Overbeek R."/>
            <person name="Kirkness E.F."/>
            <person name="Weinstock K.G."/>
            <person name="Merrick J.M."/>
            <person name="Glodek A."/>
            <person name="Scott J.L."/>
            <person name="Geoghagen N.S.M."/>
            <person name="Weidman J.F."/>
            <person name="Fuhrmann J.L."/>
            <person name="Nguyen D."/>
            <person name="Utterback T.R."/>
            <person name="Kelley J.M."/>
            <person name="Peterson J.D."/>
            <person name="Sadow P.W."/>
            <person name="Hanna M.C."/>
            <person name="Cotton M.D."/>
            <person name="Roberts K.M."/>
            <person name="Hurst M.A."/>
            <person name="Kaine B.P."/>
            <person name="Borodovsky M."/>
            <person name="Klenk H.-P."/>
            <person name="Fraser C.M."/>
            <person name="Smith H.O."/>
            <person name="Woese C.R."/>
            <person name="Venter J.C."/>
        </authorList>
    </citation>
    <scope>NUCLEOTIDE SEQUENCE [LARGE SCALE GENOMIC DNA]</scope>
    <source>
        <strain>ATCC 43067 / DSM 2661 / JAL-1 / JCM 10045 / NBRC 100440</strain>
    </source>
</reference>
<reference key="2">
    <citation type="journal article" date="2011" name="RNA Biol.">
        <title>Distinct activities of several RNase J proteins in methanogenic archaea.</title>
        <authorList>
            <person name="Levy S."/>
            <person name="Portnoy V."/>
            <person name="Admon J."/>
            <person name="Schuster G."/>
        </authorList>
    </citation>
    <scope>FUNCTION AS AN EXORIBONUCLEASE</scope>
    <scope>ACTIVITY REGULATION</scope>
    <scope>BIOPHYSICOCHEMICAL PROPERTIES</scope>
    <scope>POSSIBLE SUBUNIT</scope>
    <source>
        <strain>ATCC 43067 / DSM 2661 / JAL-1 / JCM 10045 / NBRC 100440</strain>
    </source>
</reference>
<accession>Q57626</accession>
<organism>
    <name type="scientific">Methanocaldococcus jannaschii (strain ATCC 43067 / DSM 2661 / JAL-1 / JCM 10045 / NBRC 100440)</name>
    <name type="common">Methanococcus jannaschii</name>
    <dbReference type="NCBI Taxonomy" id="243232"/>
    <lineage>
        <taxon>Archaea</taxon>
        <taxon>Methanobacteriati</taxon>
        <taxon>Methanobacteriota</taxon>
        <taxon>Methanomada group</taxon>
        <taxon>Methanococci</taxon>
        <taxon>Methanococcales</taxon>
        <taxon>Methanocaldococcaceae</taxon>
        <taxon>Methanocaldococcus</taxon>
    </lineage>
</organism>
<evidence type="ECO:0000250" key="1">
    <source>
        <dbReference type="UniProtKB" id="Q58271"/>
    </source>
</evidence>
<evidence type="ECO:0000269" key="2">
    <source>
    </source>
</evidence>
<evidence type="ECO:0000303" key="3">
    <source>
    </source>
</evidence>
<evidence type="ECO:0000305" key="4"/>
<evidence type="ECO:0000305" key="5">
    <source>
    </source>
</evidence>